<reference key="1">
    <citation type="journal article" date="2005" name="PLoS Biol.">
        <title>The Wolbachia genome of Brugia malayi: endosymbiont evolution within a human pathogenic nematode.</title>
        <authorList>
            <person name="Foster J."/>
            <person name="Ganatra M."/>
            <person name="Kamal I."/>
            <person name="Ware J."/>
            <person name="Makarova K."/>
            <person name="Ivanova N."/>
            <person name="Bhattacharyya A."/>
            <person name="Kapatral V."/>
            <person name="Kumar S."/>
            <person name="Posfai J."/>
            <person name="Vincze T."/>
            <person name="Ingram J."/>
            <person name="Moran L."/>
            <person name="Lapidus A."/>
            <person name="Omelchenko M."/>
            <person name="Kyrpides N."/>
            <person name="Ghedin E."/>
            <person name="Wang S."/>
            <person name="Goltsman E."/>
            <person name="Joukov V."/>
            <person name="Ostrovskaya O."/>
            <person name="Tsukerman K."/>
            <person name="Mazur M."/>
            <person name="Comb D."/>
            <person name="Koonin E."/>
            <person name="Slatko B."/>
        </authorList>
    </citation>
    <scope>NUCLEOTIDE SEQUENCE [LARGE SCALE GENOMIC DNA]</scope>
    <source>
        <strain>TRS</strain>
    </source>
</reference>
<evidence type="ECO:0000255" key="1">
    <source>
        <dbReference type="HAMAP-Rule" id="MF_00268"/>
    </source>
</evidence>
<dbReference type="EMBL" id="AE017321">
    <property type="protein sequence ID" value="AAW71015.1"/>
    <property type="molecule type" value="Genomic_DNA"/>
</dbReference>
<dbReference type="RefSeq" id="WP_011256625.1">
    <property type="nucleotide sequence ID" value="NC_006833.1"/>
</dbReference>
<dbReference type="SMR" id="Q5GSK9"/>
<dbReference type="STRING" id="292805.Wbm0427"/>
<dbReference type="KEGG" id="wbm:Wbm0427"/>
<dbReference type="eggNOG" id="COG0468">
    <property type="taxonomic scope" value="Bacteria"/>
</dbReference>
<dbReference type="HOGENOM" id="CLU_040469_3_2_5"/>
<dbReference type="Proteomes" id="UP000000534">
    <property type="component" value="Chromosome"/>
</dbReference>
<dbReference type="GO" id="GO:0005829">
    <property type="term" value="C:cytosol"/>
    <property type="evidence" value="ECO:0007669"/>
    <property type="project" value="TreeGrafter"/>
</dbReference>
<dbReference type="GO" id="GO:0005524">
    <property type="term" value="F:ATP binding"/>
    <property type="evidence" value="ECO:0007669"/>
    <property type="project" value="UniProtKB-UniRule"/>
</dbReference>
<dbReference type="GO" id="GO:0016887">
    <property type="term" value="F:ATP hydrolysis activity"/>
    <property type="evidence" value="ECO:0007669"/>
    <property type="project" value="InterPro"/>
</dbReference>
<dbReference type="GO" id="GO:0140664">
    <property type="term" value="F:ATP-dependent DNA damage sensor activity"/>
    <property type="evidence" value="ECO:0007669"/>
    <property type="project" value="InterPro"/>
</dbReference>
<dbReference type="GO" id="GO:0003684">
    <property type="term" value="F:damaged DNA binding"/>
    <property type="evidence" value="ECO:0007669"/>
    <property type="project" value="UniProtKB-UniRule"/>
</dbReference>
<dbReference type="GO" id="GO:0003697">
    <property type="term" value="F:single-stranded DNA binding"/>
    <property type="evidence" value="ECO:0007669"/>
    <property type="project" value="UniProtKB-UniRule"/>
</dbReference>
<dbReference type="GO" id="GO:0006310">
    <property type="term" value="P:DNA recombination"/>
    <property type="evidence" value="ECO:0007669"/>
    <property type="project" value="UniProtKB-UniRule"/>
</dbReference>
<dbReference type="GO" id="GO:0006281">
    <property type="term" value="P:DNA repair"/>
    <property type="evidence" value="ECO:0007669"/>
    <property type="project" value="UniProtKB-UniRule"/>
</dbReference>
<dbReference type="GO" id="GO:0009432">
    <property type="term" value="P:SOS response"/>
    <property type="evidence" value="ECO:0007669"/>
    <property type="project" value="UniProtKB-UniRule"/>
</dbReference>
<dbReference type="CDD" id="cd00983">
    <property type="entry name" value="RecA"/>
    <property type="match status" value="1"/>
</dbReference>
<dbReference type="FunFam" id="3.40.50.300:FF:000087">
    <property type="entry name" value="Recombinase RecA"/>
    <property type="match status" value="1"/>
</dbReference>
<dbReference type="Gene3D" id="3.40.50.300">
    <property type="entry name" value="P-loop containing nucleotide triphosphate hydrolases"/>
    <property type="match status" value="1"/>
</dbReference>
<dbReference type="HAMAP" id="MF_00268">
    <property type="entry name" value="RecA"/>
    <property type="match status" value="1"/>
</dbReference>
<dbReference type="InterPro" id="IPR003593">
    <property type="entry name" value="AAA+_ATPase"/>
</dbReference>
<dbReference type="InterPro" id="IPR013765">
    <property type="entry name" value="DNA_recomb/repair_RecA"/>
</dbReference>
<dbReference type="InterPro" id="IPR020584">
    <property type="entry name" value="DNA_recomb/repair_RecA_CS"/>
</dbReference>
<dbReference type="InterPro" id="IPR027417">
    <property type="entry name" value="P-loop_NTPase"/>
</dbReference>
<dbReference type="InterPro" id="IPR049261">
    <property type="entry name" value="RecA-like_C"/>
</dbReference>
<dbReference type="InterPro" id="IPR049428">
    <property type="entry name" value="RecA-like_N"/>
</dbReference>
<dbReference type="InterPro" id="IPR020588">
    <property type="entry name" value="RecA_ATP-bd"/>
</dbReference>
<dbReference type="InterPro" id="IPR023400">
    <property type="entry name" value="RecA_C_sf"/>
</dbReference>
<dbReference type="InterPro" id="IPR020587">
    <property type="entry name" value="RecA_monomer-monomer_interface"/>
</dbReference>
<dbReference type="NCBIfam" id="TIGR02012">
    <property type="entry name" value="tigrfam_recA"/>
    <property type="match status" value="1"/>
</dbReference>
<dbReference type="PANTHER" id="PTHR45900:SF1">
    <property type="entry name" value="MITOCHONDRIAL DNA REPAIR PROTEIN RECA HOMOLOG-RELATED"/>
    <property type="match status" value="1"/>
</dbReference>
<dbReference type="PANTHER" id="PTHR45900">
    <property type="entry name" value="RECA"/>
    <property type="match status" value="1"/>
</dbReference>
<dbReference type="Pfam" id="PF00154">
    <property type="entry name" value="RecA"/>
    <property type="match status" value="1"/>
</dbReference>
<dbReference type="Pfam" id="PF21096">
    <property type="entry name" value="RecA_C"/>
    <property type="match status" value="1"/>
</dbReference>
<dbReference type="PRINTS" id="PR00142">
    <property type="entry name" value="RECA"/>
</dbReference>
<dbReference type="SMART" id="SM00382">
    <property type="entry name" value="AAA"/>
    <property type="match status" value="1"/>
</dbReference>
<dbReference type="SUPFAM" id="SSF52540">
    <property type="entry name" value="P-loop containing nucleoside triphosphate hydrolases"/>
    <property type="match status" value="1"/>
</dbReference>
<dbReference type="SUPFAM" id="SSF54752">
    <property type="entry name" value="RecA protein, C-terminal domain"/>
    <property type="match status" value="1"/>
</dbReference>
<dbReference type="PROSITE" id="PS00321">
    <property type="entry name" value="RECA_1"/>
    <property type="match status" value="1"/>
</dbReference>
<dbReference type="PROSITE" id="PS50162">
    <property type="entry name" value="RECA_2"/>
    <property type="match status" value="1"/>
</dbReference>
<dbReference type="PROSITE" id="PS50163">
    <property type="entry name" value="RECA_3"/>
    <property type="match status" value="1"/>
</dbReference>
<gene>
    <name evidence="1" type="primary">recA</name>
    <name type="ordered locus">Wbm0427</name>
</gene>
<proteinExistence type="inferred from homology"/>
<sequence>MASNPEEKSNDRQKALDNAISQIEKAFGKGAIMKLKQNPVEKIDTISTGSIALDSALGVGGLPKGRIVEIFGPESSGKTTLALHVIAEAQKKGGLCAFIDAEHALDVMYARKLGVNTDNLVISQPDTGEQALHIVEYLVCSSAVDVIVVDSVAALTPRAEIEGDMGDQHVGLQARLLSHGLRKLTSAVSKANCILIFINQIRMKIGVVYGNPETTTGGNALKFYTSVRLDIRKVGAIKDKESIKGNETRVKVVKNKVAPPFREAKFDIMYNEGVSKLGEIIDIGAKLGVLEKAGAYYSYNNTRLGQGRENVKNYFKANKEVANEVEAKIRDLLGNSDNSITMEEESRQLLEEAVF</sequence>
<name>RECA_WOLTR</name>
<accession>Q5GSK9</accession>
<organism>
    <name type="scientific">Wolbachia sp. subsp. Brugia malayi (strain TRS)</name>
    <dbReference type="NCBI Taxonomy" id="292805"/>
    <lineage>
        <taxon>Bacteria</taxon>
        <taxon>Pseudomonadati</taxon>
        <taxon>Pseudomonadota</taxon>
        <taxon>Alphaproteobacteria</taxon>
        <taxon>Rickettsiales</taxon>
        <taxon>Anaplasmataceae</taxon>
        <taxon>Wolbachieae</taxon>
        <taxon>Wolbachia</taxon>
    </lineage>
</organism>
<comment type="function">
    <text evidence="1">Can catalyze the hydrolysis of ATP in the presence of single-stranded DNA, the ATP-dependent uptake of single-stranded DNA by duplex DNA, and the ATP-dependent hybridization of homologous single-stranded DNAs. It interacts with LexA causing its activation and leading to its autocatalytic cleavage.</text>
</comment>
<comment type="subcellular location">
    <subcellularLocation>
        <location evidence="1">Cytoplasm</location>
    </subcellularLocation>
</comment>
<comment type="similarity">
    <text evidence="1">Belongs to the RecA family.</text>
</comment>
<feature type="chain" id="PRO_0000122900" description="Protein RecA">
    <location>
        <begin position="1"/>
        <end position="355"/>
    </location>
</feature>
<feature type="binding site" evidence="1">
    <location>
        <begin position="72"/>
        <end position="79"/>
    </location>
    <ligand>
        <name>ATP</name>
        <dbReference type="ChEBI" id="CHEBI:30616"/>
    </ligand>
</feature>
<protein>
    <recommendedName>
        <fullName evidence="1">Protein RecA</fullName>
    </recommendedName>
    <alternativeName>
        <fullName evidence="1">Recombinase A</fullName>
    </alternativeName>
</protein>
<keyword id="KW-0067">ATP-binding</keyword>
<keyword id="KW-0963">Cytoplasm</keyword>
<keyword id="KW-0227">DNA damage</keyword>
<keyword id="KW-0233">DNA recombination</keyword>
<keyword id="KW-0234">DNA repair</keyword>
<keyword id="KW-0238">DNA-binding</keyword>
<keyword id="KW-0547">Nucleotide-binding</keyword>
<keyword id="KW-1185">Reference proteome</keyword>
<keyword id="KW-0742">SOS response</keyword>